<sequence length="155" mass="18561">MIDKSGYRANVAIVLLNKQNRVFWGQRRNRTSWQFPQGGVATGETPLQAMYRELHEEIGLRPQDVEVIASTRDWYKYDIPDSLVRTKEPICIGQKQKWFLLKLKSPESYIDLDANDSPEFDNWRWVSYWYPINHVVYFKQEVYRKALTYFKEYIA</sequence>
<accession>Q14JR9</accession>
<name>RPPH_FRAT1</name>
<gene>
    <name evidence="1" type="primary">rppH</name>
    <name evidence="1" type="synonym">nudH</name>
    <name type="ordered locus">FTF0160</name>
</gene>
<feature type="chain" id="PRO_1000021944" description="RNA pyrophosphohydrolase">
    <location>
        <begin position="1"/>
        <end position="155"/>
    </location>
</feature>
<feature type="domain" description="Nudix hydrolase" evidence="1">
    <location>
        <begin position="6"/>
        <end position="148"/>
    </location>
</feature>
<feature type="short sequence motif" description="Nudix box">
    <location>
        <begin position="38"/>
        <end position="59"/>
    </location>
</feature>
<dbReference type="EC" id="3.6.1.-" evidence="1"/>
<dbReference type="EMBL" id="AM286280">
    <property type="protein sequence ID" value="CAL08176.1"/>
    <property type="molecule type" value="Genomic_DNA"/>
</dbReference>
<dbReference type="RefSeq" id="WP_003017197.1">
    <property type="nucleotide sequence ID" value="NC_008245.1"/>
</dbReference>
<dbReference type="SMR" id="Q14JR9"/>
<dbReference type="KEGG" id="ftf:FTF0160"/>
<dbReference type="HOGENOM" id="CLU_087195_3_1_6"/>
<dbReference type="GO" id="GO:0016462">
    <property type="term" value="F:pyrophosphatase activity"/>
    <property type="evidence" value="ECO:0007669"/>
    <property type="project" value="UniProtKB-ARBA"/>
</dbReference>
<dbReference type="CDD" id="cd03671">
    <property type="entry name" value="NUDIX_Ap4A_hydrolase_plant_like"/>
    <property type="match status" value="1"/>
</dbReference>
<dbReference type="Gene3D" id="3.90.79.10">
    <property type="entry name" value="Nucleoside Triphosphate Pyrophosphohydrolase"/>
    <property type="match status" value="1"/>
</dbReference>
<dbReference type="HAMAP" id="MF_00298">
    <property type="entry name" value="Nudix_RppH"/>
    <property type="match status" value="1"/>
</dbReference>
<dbReference type="InterPro" id="IPR020476">
    <property type="entry name" value="Nudix_hydrolase"/>
</dbReference>
<dbReference type="InterPro" id="IPR015797">
    <property type="entry name" value="NUDIX_hydrolase-like_dom_sf"/>
</dbReference>
<dbReference type="InterPro" id="IPR020084">
    <property type="entry name" value="NUDIX_hydrolase_CS"/>
</dbReference>
<dbReference type="InterPro" id="IPR000086">
    <property type="entry name" value="NUDIX_hydrolase_dom"/>
</dbReference>
<dbReference type="InterPro" id="IPR022927">
    <property type="entry name" value="RppH"/>
</dbReference>
<dbReference type="NCBIfam" id="NF001936">
    <property type="entry name" value="PRK00714.1-3"/>
    <property type="match status" value="1"/>
</dbReference>
<dbReference type="NCBIfam" id="NF001937">
    <property type="entry name" value="PRK00714.1-4"/>
    <property type="match status" value="1"/>
</dbReference>
<dbReference type="NCBIfam" id="NF001938">
    <property type="entry name" value="PRK00714.1-5"/>
    <property type="match status" value="1"/>
</dbReference>
<dbReference type="PANTHER" id="PTHR43736">
    <property type="entry name" value="ADP-RIBOSE PYROPHOSPHATASE"/>
    <property type="match status" value="1"/>
</dbReference>
<dbReference type="PANTHER" id="PTHR43736:SF1">
    <property type="entry name" value="DIHYDRONEOPTERIN TRIPHOSPHATE DIPHOSPHATASE"/>
    <property type="match status" value="1"/>
</dbReference>
<dbReference type="Pfam" id="PF00293">
    <property type="entry name" value="NUDIX"/>
    <property type="match status" value="1"/>
</dbReference>
<dbReference type="PRINTS" id="PR00502">
    <property type="entry name" value="NUDIXFAMILY"/>
</dbReference>
<dbReference type="SUPFAM" id="SSF55811">
    <property type="entry name" value="Nudix"/>
    <property type="match status" value="1"/>
</dbReference>
<dbReference type="PROSITE" id="PS51462">
    <property type="entry name" value="NUDIX"/>
    <property type="match status" value="1"/>
</dbReference>
<dbReference type="PROSITE" id="PS00893">
    <property type="entry name" value="NUDIX_BOX"/>
    <property type="match status" value="1"/>
</dbReference>
<organism>
    <name type="scientific">Francisella tularensis subsp. tularensis (strain FSC 198)</name>
    <dbReference type="NCBI Taxonomy" id="393115"/>
    <lineage>
        <taxon>Bacteria</taxon>
        <taxon>Pseudomonadati</taxon>
        <taxon>Pseudomonadota</taxon>
        <taxon>Gammaproteobacteria</taxon>
        <taxon>Thiotrichales</taxon>
        <taxon>Francisellaceae</taxon>
        <taxon>Francisella</taxon>
    </lineage>
</organism>
<keyword id="KW-0378">Hydrolase</keyword>
<reference key="1">
    <citation type="journal article" date="2007" name="PLoS ONE">
        <title>Genome sequencing shows that European isolates of Francisella tularensis subspecies tularensis are almost identical to US laboratory strain Schu S4.</title>
        <authorList>
            <person name="Chaudhuri R.R."/>
            <person name="Ren C.-P."/>
            <person name="Desmond L."/>
            <person name="Vincent G.A."/>
            <person name="Silman N.J."/>
            <person name="Brehm J.K."/>
            <person name="Elmore M.J."/>
            <person name="Hudson M.J."/>
            <person name="Forsman M."/>
            <person name="Isherwood K.E."/>
            <person name="Gurycova D."/>
            <person name="Minton N.P."/>
            <person name="Titball R.W."/>
            <person name="Pallen M.J."/>
            <person name="Vipond R."/>
        </authorList>
    </citation>
    <scope>NUCLEOTIDE SEQUENCE [LARGE SCALE GENOMIC DNA]</scope>
    <source>
        <strain>FSC 198</strain>
    </source>
</reference>
<evidence type="ECO:0000255" key="1">
    <source>
        <dbReference type="HAMAP-Rule" id="MF_00298"/>
    </source>
</evidence>
<comment type="function">
    <text evidence="1">Accelerates the degradation of transcripts by removing pyrophosphate from the 5'-end of triphosphorylated RNA, leading to a more labile monophosphorylated state that can stimulate subsequent ribonuclease cleavage.</text>
</comment>
<comment type="cofactor">
    <cofactor evidence="1">
        <name>a divalent metal cation</name>
        <dbReference type="ChEBI" id="CHEBI:60240"/>
    </cofactor>
</comment>
<comment type="similarity">
    <text evidence="1">Belongs to the Nudix hydrolase family. RppH subfamily.</text>
</comment>
<protein>
    <recommendedName>
        <fullName evidence="1">RNA pyrophosphohydrolase</fullName>
        <ecNumber evidence="1">3.6.1.-</ecNumber>
    </recommendedName>
    <alternativeName>
        <fullName evidence="1">(Di)nucleoside polyphosphate hydrolase</fullName>
    </alternativeName>
</protein>
<proteinExistence type="inferred from homology"/>